<gene>
    <name evidence="1" type="primary">guaA</name>
    <name type="ordered locus">NGO_2164</name>
</gene>
<keyword id="KW-0067">ATP-binding</keyword>
<keyword id="KW-0315">Glutamine amidotransferase</keyword>
<keyword id="KW-0332">GMP biosynthesis</keyword>
<keyword id="KW-0436">Ligase</keyword>
<keyword id="KW-0547">Nucleotide-binding</keyword>
<keyword id="KW-0658">Purine biosynthesis</keyword>
<keyword id="KW-1185">Reference proteome</keyword>
<sequence>MTQDKILILDFGSQVTRLIARRVREAHVYCELHSFDMPLDEIKAFNPKGIILSGGPNSVYESDYQADTGIFDLGIPVLGICYGMQFMAHHLGGEVQPGNQREFGYAQVKTIDSGLTRGIQDDAPNTLDVWMSHGDKVSKLPDGFAVIGDTPSCPIAMMENAEKQFYGIQFHPEVTHTKQGRALLNRFVLDICGAQPGWTMPNYIEEAVAKIREQVGSDEVILGLSGGVDSSVAAALIHRAIGDQLTCVFVDHGLLRLNEGKMVMDMFARNLGVKVIHVDAEGQFMAKLAGVTDPEKKRKIIGAEFIEVFDAEEKKLTNAKWLAQGTIYPDVIESAGAKTKKAHAIKSHHNVGGLPENMKLKLLEPLRDLFKDEVRELGVALGLPREMVYRHPFPGPGLGVRILGEVKKEYADLLRQADDIFIQELRNTTDENGTSWYDLTSQAFAVFLPVKSVGVMGDGRTYDYVVALRAVITSDFMTAHWAELPYSLLGRVSNRIINEVKGINRVVYDVSGKPPATIEWE</sequence>
<comment type="function">
    <text evidence="1">Catalyzes the synthesis of GMP from XMP.</text>
</comment>
<comment type="catalytic activity">
    <reaction evidence="1">
        <text>XMP + L-glutamine + ATP + H2O = GMP + L-glutamate + AMP + diphosphate + 2 H(+)</text>
        <dbReference type="Rhea" id="RHEA:11680"/>
        <dbReference type="ChEBI" id="CHEBI:15377"/>
        <dbReference type="ChEBI" id="CHEBI:15378"/>
        <dbReference type="ChEBI" id="CHEBI:29985"/>
        <dbReference type="ChEBI" id="CHEBI:30616"/>
        <dbReference type="ChEBI" id="CHEBI:33019"/>
        <dbReference type="ChEBI" id="CHEBI:57464"/>
        <dbReference type="ChEBI" id="CHEBI:58115"/>
        <dbReference type="ChEBI" id="CHEBI:58359"/>
        <dbReference type="ChEBI" id="CHEBI:456215"/>
        <dbReference type="EC" id="6.3.5.2"/>
    </reaction>
</comment>
<comment type="pathway">
    <text evidence="1">Purine metabolism; GMP biosynthesis; GMP from XMP (L-Gln route): step 1/1.</text>
</comment>
<comment type="subunit">
    <text evidence="1">Homodimer.</text>
</comment>
<feature type="chain" id="PRO_0000229445" description="GMP synthase [glutamine-hydrolyzing]">
    <location>
        <begin position="1"/>
        <end position="521"/>
    </location>
</feature>
<feature type="domain" description="Glutamine amidotransferase type-1" evidence="1">
    <location>
        <begin position="5"/>
        <end position="197"/>
    </location>
</feature>
<feature type="domain" description="GMPS ATP-PPase" evidence="1">
    <location>
        <begin position="198"/>
        <end position="390"/>
    </location>
</feature>
<feature type="active site" description="Nucleophile" evidence="1">
    <location>
        <position position="81"/>
    </location>
</feature>
<feature type="active site" evidence="1">
    <location>
        <position position="171"/>
    </location>
</feature>
<feature type="active site" evidence="1">
    <location>
        <position position="173"/>
    </location>
</feature>
<feature type="binding site" evidence="1">
    <location>
        <begin position="225"/>
        <end position="231"/>
    </location>
    <ligand>
        <name>ATP</name>
        <dbReference type="ChEBI" id="CHEBI:30616"/>
    </ligand>
</feature>
<name>GUAA_NEIG1</name>
<protein>
    <recommendedName>
        <fullName evidence="1">GMP synthase [glutamine-hydrolyzing]</fullName>
        <ecNumber evidence="1">6.3.5.2</ecNumber>
    </recommendedName>
    <alternativeName>
        <fullName evidence="1">GMP synthetase</fullName>
    </alternativeName>
    <alternativeName>
        <fullName evidence="1">Glutamine amidotransferase</fullName>
    </alternativeName>
</protein>
<proteinExistence type="inferred from homology"/>
<evidence type="ECO:0000255" key="1">
    <source>
        <dbReference type="HAMAP-Rule" id="MF_00344"/>
    </source>
</evidence>
<accession>Q5F4X9</accession>
<reference key="1">
    <citation type="submission" date="2003-03" db="EMBL/GenBank/DDBJ databases">
        <title>The complete genome sequence of Neisseria gonorrhoeae.</title>
        <authorList>
            <person name="Lewis L.A."/>
            <person name="Gillaspy A.F."/>
            <person name="McLaughlin R.E."/>
            <person name="Gipson M."/>
            <person name="Ducey T.F."/>
            <person name="Ownbey T."/>
            <person name="Hartman K."/>
            <person name="Nydick C."/>
            <person name="Carson M.B."/>
            <person name="Vaughn J."/>
            <person name="Thomson C."/>
            <person name="Song L."/>
            <person name="Lin S."/>
            <person name="Yuan X."/>
            <person name="Najar F."/>
            <person name="Zhan M."/>
            <person name="Ren Q."/>
            <person name="Zhu H."/>
            <person name="Qi S."/>
            <person name="Kenton S.M."/>
            <person name="Lai H."/>
            <person name="White J.D."/>
            <person name="Clifton S."/>
            <person name="Roe B.A."/>
            <person name="Dyer D.W."/>
        </authorList>
    </citation>
    <scope>NUCLEOTIDE SEQUENCE [LARGE SCALE GENOMIC DNA]</scope>
    <source>
        <strain>ATCC 700825 / FA 1090</strain>
    </source>
</reference>
<organism>
    <name type="scientific">Neisseria gonorrhoeae (strain ATCC 700825 / FA 1090)</name>
    <dbReference type="NCBI Taxonomy" id="242231"/>
    <lineage>
        <taxon>Bacteria</taxon>
        <taxon>Pseudomonadati</taxon>
        <taxon>Pseudomonadota</taxon>
        <taxon>Betaproteobacteria</taxon>
        <taxon>Neisseriales</taxon>
        <taxon>Neisseriaceae</taxon>
        <taxon>Neisseria</taxon>
    </lineage>
</organism>
<dbReference type="EC" id="6.3.5.2" evidence="1"/>
<dbReference type="EMBL" id="AE004969">
    <property type="protein sequence ID" value="AAW90758.1"/>
    <property type="molecule type" value="Genomic_DNA"/>
</dbReference>
<dbReference type="RefSeq" id="WP_003696594.1">
    <property type="nucleotide sequence ID" value="NC_002946.2"/>
</dbReference>
<dbReference type="RefSeq" id="YP_209170.1">
    <property type="nucleotide sequence ID" value="NC_002946.2"/>
</dbReference>
<dbReference type="SMR" id="Q5F4X9"/>
<dbReference type="STRING" id="242231.NGO_2164"/>
<dbReference type="MEROPS" id="C26.957"/>
<dbReference type="KEGG" id="ngo:NGO_2164"/>
<dbReference type="PATRIC" id="fig|242231.10.peg.2614"/>
<dbReference type="HOGENOM" id="CLU_014340_0_5_4"/>
<dbReference type="UniPathway" id="UPA00189">
    <property type="reaction ID" value="UER00296"/>
</dbReference>
<dbReference type="Proteomes" id="UP000000535">
    <property type="component" value="Chromosome"/>
</dbReference>
<dbReference type="GO" id="GO:0005829">
    <property type="term" value="C:cytosol"/>
    <property type="evidence" value="ECO:0007669"/>
    <property type="project" value="TreeGrafter"/>
</dbReference>
<dbReference type="GO" id="GO:0005524">
    <property type="term" value="F:ATP binding"/>
    <property type="evidence" value="ECO:0007669"/>
    <property type="project" value="UniProtKB-UniRule"/>
</dbReference>
<dbReference type="GO" id="GO:0003921">
    <property type="term" value="F:GMP synthase activity"/>
    <property type="evidence" value="ECO:0007669"/>
    <property type="project" value="InterPro"/>
</dbReference>
<dbReference type="CDD" id="cd01742">
    <property type="entry name" value="GATase1_GMP_Synthase"/>
    <property type="match status" value="1"/>
</dbReference>
<dbReference type="CDD" id="cd01997">
    <property type="entry name" value="GMP_synthase_C"/>
    <property type="match status" value="1"/>
</dbReference>
<dbReference type="FunFam" id="3.30.300.10:FF:000002">
    <property type="entry name" value="GMP synthase [glutamine-hydrolyzing]"/>
    <property type="match status" value="1"/>
</dbReference>
<dbReference type="FunFam" id="3.40.50.620:FF:000001">
    <property type="entry name" value="GMP synthase [glutamine-hydrolyzing]"/>
    <property type="match status" value="1"/>
</dbReference>
<dbReference type="FunFam" id="3.40.50.880:FF:000001">
    <property type="entry name" value="GMP synthase [glutamine-hydrolyzing]"/>
    <property type="match status" value="1"/>
</dbReference>
<dbReference type="Gene3D" id="3.30.300.10">
    <property type="match status" value="1"/>
</dbReference>
<dbReference type="Gene3D" id="3.40.50.880">
    <property type="match status" value="1"/>
</dbReference>
<dbReference type="Gene3D" id="3.40.50.620">
    <property type="entry name" value="HUPs"/>
    <property type="match status" value="1"/>
</dbReference>
<dbReference type="HAMAP" id="MF_00344">
    <property type="entry name" value="GMP_synthase"/>
    <property type="match status" value="1"/>
</dbReference>
<dbReference type="InterPro" id="IPR029062">
    <property type="entry name" value="Class_I_gatase-like"/>
</dbReference>
<dbReference type="InterPro" id="IPR017926">
    <property type="entry name" value="GATASE"/>
</dbReference>
<dbReference type="InterPro" id="IPR001674">
    <property type="entry name" value="GMP_synth_C"/>
</dbReference>
<dbReference type="InterPro" id="IPR004739">
    <property type="entry name" value="GMP_synth_GATase"/>
</dbReference>
<dbReference type="InterPro" id="IPR022955">
    <property type="entry name" value="GMP_synthase"/>
</dbReference>
<dbReference type="InterPro" id="IPR025777">
    <property type="entry name" value="GMPS_ATP_PPase_dom"/>
</dbReference>
<dbReference type="InterPro" id="IPR022310">
    <property type="entry name" value="NAD/GMP_synthase"/>
</dbReference>
<dbReference type="InterPro" id="IPR014729">
    <property type="entry name" value="Rossmann-like_a/b/a_fold"/>
</dbReference>
<dbReference type="NCBIfam" id="TIGR00884">
    <property type="entry name" value="guaA_Cterm"/>
    <property type="match status" value="1"/>
</dbReference>
<dbReference type="NCBIfam" id="TIGR00888">
    <property type="entry name" value="guaA_Nterm"/>
    <property type="match status" value="1"/>
</dbReference>
<dbReference type="NCBIfam" id="NF000848">
    <property type="entry name" value="PRK00074.1"/>
    <property type="match status" value="1"/>
</dbReference>
<dbReference type="PANTHER" id="PTHR11922:SF2">
    <property type="entry name" value="GMP SYNTHASE [GLUTAMINE-HYDROLYZING]"/>
    <property type="match status" value="1"/>
</dbReference>
<dbReference type="PANTHER" id="PTHR11922">
    <property type="entry name" value="GMP SYNTHASE-RELATED"/>
    <property type="match status" value="1"/>
</dbReference>
<dbReference type="Pfam" id="PF00117">
    <property type="entry name" value="GATase"/>
    <property type="match status" value="1"/>
</dbReference>
<dbReference type="Pfam" id="PF00958">
    <property type="entry name" value="GMP_synt_C"/>
    <property type="match status" value="1"/>
</dbReference>
<dbReference type="Pfam" id="PF02540">
    <property type="entry name" value="NAD_synthase"/>
    <property type="match status" value="1"/>
</dbReference>
<dbReference type="PRINTS" id="PR00097">
    <property type="entry name" value="ANTSNTHASEII"/>
</dbReference>
<dbReference type="PRINTS" id="PR00096">
    <property type="entry name" value="GATASE"/>
</dbReference>
<dbReference type="SUPFAM" id="SSF52402">
    <property type="entry name" value="Adenine nucleotide alpha hydrolases-like"/>
    <property type="match status" value="1"/>
</dbReference>
<dbReference type="SUPFAM" id="SSF52317">
    <property type="entry name" value="Class I glutamine amidotransferase-like"/>
    <property type="match status" value="1"/>
</dbReference>
<dbReference type="SUPFAM" id="SSF54810">
    <property type="entry name" value="GMP synthetase C-terminal dimerisation domain"/>
    <property type="match status" value="1"/>
</dbReference>
<dbReference type="PROSITE" id="PS51273">
    <property type="entry name" value="GATASE_TYPE_1"/>
    <property type="match status" value="1"/>
</dbReference>
<dbReference type="PROSITE" id="PS51553">
    <property type="entry name" value="GMPS_ATP_PPASE"/>
    <property type="match status" value="1"/>
</dbReference>